<keyword id="KW-0067">ATP-binding</keyword>
<keyword id="KW-0143">Chaperone</keyword>
<keyword id="KW-0963">Cytoplasm</keyword>
<keyword id="KW-0413">Isomerase</keyword>
<keyword id="KW-0547">Nucleotide-binding</keyword>
<keyword id="KW-1185">Reference proteome</keyword>
<comment type="function">
    <text evidence="1">Together with its co-chaperonin GroES, plays an essential role in assisting protein folding. The GroEL-GroES system forms a nano-cage that allows encapsulation of the non-native substrate proteins and provides a physical environment optimized to promote and accelerate protein folding.</text>
</comment>
<comment type="catalytic activity">
    <reaction evidence="1">
        <text>ATP + H2O + a folded polypeptide = ADP + phosphate + an unfolded polypeptide.</text>
        <dbReference type="EC" id="5.6.1.7"/>
    </reaction>
</comment>
<comment type="subunit">
    <text evidence="1">Forms a cylinder of 14 subunits composed of two heptameric rings stacked back-to-back. Interacts with the co-chaperonin GroES.</text>
</comment>
<comment type="subcellular location">
    <subcellularLocation>
        <location evidence="1">Cytoplasm</location>
    </subcellularLocation>
</comment>
<comment type="similarity">
    <text evidence="1">Belongs to the chaperonin (HSP60) family.</text>
</comment>
<name>CH602_CORGL</name>
<gene>
    <name evidence="1" type="primary">groEL2</name>
    <name evidence="1" type="synonym">groL2</name>
    <name type="ordered locus">Cgl2716</name>
    <name type="ordered locus">cg3011</name>
</gene>
<organism>
    <name type="scientific">Corynebacterium glutamicum (strain ATCC 13032 / DSM 20300 / JCM 1318 / BCRC 11384 / CCUG 27702 / LMG 3730 / NBRC 12168 / NCIMB 10025 / NRRL B-2784 / 534)</name>
    <dbReference type="NCBI Taxonomy" id="196627"/>
    <lineage>
        <taxon>Bacteria</taxon>
        <taxon>Bacillati</taxon>
        <taxon>Actinomycetota</taxon>
        <taxon>Actinomycetes</taxon>
        <taxon>Mycobacteriales</taxon>
        <taxon>Corynebacteriaceae</taxon>
        <taxon>Corynebacterium</taxon>
    </lineage>
</organism>
<feature type="chain" id="PRO_0000063353" description="Chaperonin GroEL 2">
    <location>
        <begin position="1"/>
        <end position="548"/>
    </location>
</feature>
<feature type="binding site" evidence="1">
    <location>
        <begin position="29"/>
        <end position="32"/>
    </location>
    <ligand>
        <name>ATP</name>
        <dbReference type="ChEBI" id="CHEBI:30616"/>
    </ligand>
</feature>
<feature type="binding site" evidence="1">
    <location>
        <begin position="86"/>
        <end position="90"/>
    </location>
    <ligand>
        <name>ATP</name>
        <dbReference type="ChEBI" id="CHEBI:30616"/>
    </ligand>
</feature>
<feature type="binding site" evidence="1">
    <location>
        <position position="418"/>
    </location>
    <ligand>
        <name>ATP</name>
        <dbReference type="ChEBI" id="CHEBI:30616"/>
    </ligand>
</feature>
<feature type="binding site" evidence="1">
    <location>
        <begin position="482"/>
        <end position="484"/>
    </location>
    <ligand>
        <name>ATP</name>
        <dbReference type="ChEBI" id="CHEBI:30616"/>
    </ligand>
</feature>
<feature type="binding site" evidence="1">
    <location>
        <position position="498"/>
    </location>
    <ligand>
        <name>ATP</name>
        <dbReference type="ChEBI" id="CHEBI:30616"/>
    </ligand>
</feature>
<protein>
    <recommendedName>
        <fullName evidence="1">Chaperonin GroEL 2</fullName>
        <ecNumber evidence="1">5.6.1.7</ecNumber>
    </recommendedName>
    <alternativeName>
        <fullName evidence="1">60 kDa chaperonin 2</fullName>
    </alternativeName>
    <alternativeName>
        <fullName evidence="1">Chaperonin-60 2</fullName>
        <shortName evidence="1">Cpn60 2</shortName>
    </alternativeName>
</protein>
<reference key="1">
    <citation type="journal article" date="2003" name="Appl. Microbiol. Biotechnol.">
        <title>The Corynebacterium glutamicum genome: features and impacts on biotechnological processes.</title>
        <authorList>
            <person name="Ikeda M."/>
            <person name="Nakagawa S."/>
        </authorList>
    </citation>
    <scope>NUCLEOTIDE SEQUENCE [LARGE SCALE GENOMIC DNA]</scope>
    <source>
        <strain>ATCC 13032 / DSM 20300 / JCM 1318 / BCRC 11384 / CCUG 27702 / LMG 3730 / NBRC 12168 / NCIMB 10025 / NRRL B-2784 / 534</strain>
    </source>
</reference>
<reference key="2">
    <citation type="journal article" date="2003" name="J. Biotechnol.">
        <title>The complete Corynebacterium glutamicum ATCC 13032 genome sequence and its impact on the production of L-aspartate-derived amino acids and vitamins.</title>
        <authorList>
            <person name="Kalinowski J."/>
            <person name="Bathe B."/>
            <person name="Bartels D."/>
            <person name="Bischoff N."/>
            <person name="Bott M."/>
            <person name="Burkovski A."/>
            <person name="Dusch N."/>
            <person name="Eggeling L."/>
            <person name="Eikmanns B.J."/>
            <person name="Gaigalat L."/>
            <person name="Goesmann A."/>
            <person name="Hartmann M."/>
            <person name="Huthmacher K."/>
            <person name="Kraemer R."/>
            <person name="Linke B."/>
            <person name="McHardy A.C."/>
            <person name="Meyer F."/>
            <person name="Moeckel B."/>
            <person name="Pfefferle W."/>
            <person name="Puehler A."/>
            <person name="Rey D.A."/>
            <person name="Rueckert C."/>
            <person name="Rupp O."/>
            <person name="Sahm H."/>
            <person name="Wendisch V.F."/>
            <person name="Wiegraebe I."/>
            <person name="Tauch A."/>
        </authorList>
    </citation>
    <scope>NUCLEOTIDE SEQUENCE [LARGE SCALE GENOMIC DNA]</scope>
    <source>
        <strain>ATCC 13032 / DSM 20300 / JCM 1318 / BCRC 11384 / CCUG 27702 / LMG 3730 / NBRC 12168 / NCIMB 10025 / NRRL B-2784 / 534</strain>
    </source>
</reference>
<accession>Q8NM64</accession>
<proteinExistence type="inferred from homology"/>
<evidence type="ECO:0000255" key="1">
    <source>
        <dbReference type="HAMAP-Rule" id="MF_00600"/>
    </source>
</evidence>
<sequence>MAKIIAFDEEARRGLEKGLNTLADAVKVTLGPKGRNVVLEKAWGAPTITNDGVTIAREIELEDPYEKIGAELVKEVAKKTDDVAGDGTTTATVLAQALVREGLRNVAAGSNPMGIKRGIEKAVAQVTEKLLEAAKEVETEEQIAATAGISAADPAIGAQIAKAMYAVGGGKLNKDSVITVEESNTFGVELEVTEGMRFDKGYISGYFATDMERLEAVLEDPYILLVSGKISNIKDLLPLLEKVMQSGKPLLIISEDVEGEALSTLVVNKIRGTFKSVAVKAPGFGDRRKAQLQDIAVLTGGQVISEEVGLSLETADLPLLGQARKVVVTKDDTTIVDGAGSEAQIEGRVNQIRVEIENSDSDYDREKLNERLAKLAGGVAVLKVGAATEVELKERKHRIEDAVRNAKAAVEEGIVAGGGVALLQAAHVLDNDLELSGDEATGVRIVREALTAPLKQIAANAGLEPGVVADKVSQLPQGEGLNAANGEYVDLMAAGINDPVKVTRSALQNAASIAALFLTTEAVVADKPQPAGAAGMPGADEMGGMGGF</sequence>
<dbReference type="EC" id="5.6.1.7" evidence="1"/>
<dbReference type="EMBL" id="BA000036">
    <property type="protein sequence ID" value="BAC00110.1"/>
    <property type="molecule type" value="Genomic_DNA"/>
</dbReference>
<dbReference type="EMBL" id="BX927156">
    <property type="protein sequence ID" value="CAF20739.1"/>
    <property type="molecule type" value="Genomic_DNA"/>
</dbReference>
<dbReference type="RefSeq" id="NP_601912.1">
    <property type="nucleotide sequence ID" value="NC_003450.3"/>
</dbReference>
<dbReference type="SMR" id="Q8NM64"/>
<dbReference type="STRING" id="196627.cg3011"/>
<dbReference type="KEGG" id="cgb:cg3011"/>
<dbReference type="KEGG" id="cgl:Cgl2716"/>
<dbReference type="PATRIC" id="fig|196627.13.peg.2648"/>
<dbReference type="eggNOG" id="COG0459">
    <property type="taxonomic scope" value="Bacteria"/>
</dbReference>
<dbReference type="HOGENOM" id="CLU_016503_3_0_11"/>
<dbReference type="OrthoDB" id="9766614at2"/>
<dbReference type="BioCyc" id="CORYNE:G18NG-12333-MONOMER"/>
<dbReference type="Proteomes" id="UP000000582">
    <property type="component" value="Chromosome"/>
</dbReference>
<dbReference type="Proteomes" id="UP000001009">
    <property type="component" value="Chromosome"/>
</dbReference>
<dbReference type="GO" id="GO:0005737">
    <property type="term" value="C:cytoplasm"/>
    <property type="evidence" value="ECO:0007669"/>
    <property type="project" value="UniProtKB-SubCell"/>
</dbReference>
<dbReference type="GO" id="GO:0005524">
    <property type="term" value="F:ATP binding"/>
    <property type="evidence" value="ECO:0007669"/>
    <property type="project" value="UniProtKB-UniRule"/>
</dbReference>
<dbReference type="GO" id="GO:0140662">
    <property type="term" value="F:ATP-dependent protein folding chaperone"/>
    <property type="evidence" value="ECO:0007669"/>
    <property type="project" value="InterPro"/>
</dbReference>
<dbReference type="GO" id="GO:0016853">
    <property type="term" value="F:isomerase activity"/>
    <property type="evidence" value="ECO:0007669"/>
    <property type="project" value="UniProtKB-KW"/>
</dbReference>
<dbReference type="GO" id="GO:0051082">
    <property type="term" value="F:unfolded protein binding"/>
    <property type="evidence" value="ECO:0007669"/>
    <property type="project" value="UniProtKB-UniRule"/>
</dbReference>
<dbReference type="GO" id="GO:0042026">
    <property type="term" value="P:protein refolding"/>
    <property type="evidence" value="ECO:0007669"/>
    <property type="project" value="UniProtKB-UniRule"/>
</dbReference>
<dbReference type="CDD" id="cd03344">
    <property type="entry name" value="GroEL"/>
    <property type="match status" value="1"/>
</dbReference>
<dbReference type="FunFam" id="3.50.7.10:FF:000001">
    <property type="entry name" value="60 kDa chaperonin"/>
    <property type="match status" value="1"/>
</dbReference>
<dbReference type="Gene3D" id="3.50.7.10">
    <property type="entry name" value="GroEL"/>
    <property type="match status" value="1"/>
</dbReference>
<dbReference type="Gene3D" id="1.10.560.10">
    <property type="entry name" value="GroEL-like equatorial domain"/>
    <property type="match status" value="1"/>
</dbReference>
<dbReference type="Gene3D" id="3.30.260.10">
    <property type="entry name" value="TCP-1-like chaperonin intermediate domain"/>
    <property type="match status" value="1"/>
</dbReference>
<dbReference type="HAMAP" id="MF_00600">
    <property type="entry name" value="CH60"/>
    <property type="match status" value="1"/>
</dbReference>
<dbReference type="InterPro" id="IPR018370">
    <property type="entry name" value="Chaperonin_Cpn60_CS"/>
</dbReference>
<dbReference type="InterPro" id="IPR001844">
    <property type="entry name" value="Cpn60/GroEL"/>
</dbReference>
<dbReference type="InterPro" id="IPR002423">
    <property type="entry name" value="Cpn60/GroEL/TCP-1"/>
</dbReference>
<dbReference type="InterPro" id="IPR027409">
    <property type="entry name" value="GroEL-like_apical_dom_sf"/>
</dbReference>
<dbReference type="InterPro" id="IPR027413">
    <property type="entry name" value="GROEL-like_equatorial_sf"/>
</dbReference>
<dbReference type="InterPro" id="IPR027410">
    <property type="entry name" value="TCP-1-like_intermed_sf"/>
</dbReference>
<dbReference type="NCBIfam" id="TIGR02348">
    <property type="entry name" value="GroEL"/>
    <property type="match status" value="1"/>
</dbReference>
<dbReference type="NCBIfam" id="NF000592">
    <property type="entry name" value="PRK00013.1"/>
    <property type="match status" value="1"/>
</dbReference>
<dbReference type="NCBIfam" id="NF009487">
    <property type="entry name" value="PRK12849.1"/>
    <property type="match status" value="1"/>
</dbReference>
<dbReference type="NCBIfam" id="NF009488">
    <property type="entry name" value="PRK12850.1"/>
    <property type="match status" value="1"/>
</dbReference>
<dbReference type="NCBIfam" id="NF009489">
    <property type="entry name" value="PRK12851.1"/>
    <property type="match status" value="1"/>
</dbReference>
<dbReference type="PANTHER" id="PTHR45633">
    <property type="entry name" value="60 KDA HEAT SHOCK PROTEIN, MITOCHONDRIAL"/>
    <property type="match status" value="1"/>
</dbReference>
<dbReference type="Pfam" id="PF00118">
    <property type="entry name" value="Cpn60_TCP1"/>
    <property type="match status" value="1"/>
</dbReference>
<dbReference type="PRINTS" id="PR00298">
    <property type="entry name" value="CHAPERONIN60"/>
</dbReference>
<dbReference type="SUPFAM" id="SSF52029">
    <property type="entry name" value="GroEL apical domain-like"/>
    <property type="match status" value="1"/>
</dbReference>
<dbReference type="SUPFAM" id="SSF48592">
    <property type="entry name" value="GroEL equatorial domain-like"/>
    <property type="match status" value="1"/>
</dbReference>
<dbReference type="SUPFAM" id="SSF54849">
    <property type="entry name" value="GroEL-intermediate domain like"/>
    <property type="match status" value="1"/>
</dbReference>
<dbReference type="PROSITE" id="PS00296">
    <property type="entry name" value="CHAPERONINS_CPN60"/>
    <property type="match status" value="1"/>
</dbReference>